<organism>
    <name type="scientific">Saccharomyces cerevisiae (strain YJM789)</name>
    <name type="common">Baker's yeast</name>
    <dbReference type="NCBI Taxonomy" id="307796"/>
    <lineage>
        <taxon>Eukaryota</taxon>
        <taxon>Fungi</taxon>
        <taxon>Dikarya</taxon>
        <taxon>Ascomycota</taxon>
        <taxon>Saccharomycotina</taxon>
        <taxon>Saccharomycetes</taxon>
        <taxon>Saccharomycetales</taxon>
        <taxon>Saccharomycetaceae</taxon>
        <taxon>Saccharomyces</taxon>
    </lineage>
</organism>
<accession>A7A0X8</accession>
<comment type="function">
    <text evidence="1">Inhibitor of the DOA4 deubiquitinase involved in the regulation of protein degradation by the proteasome and maintenance of a normal level of free ubiquitin.</text>
</comment>
<comment type="subunit">
    <text evidence="1">Interacts with BRO1 and DOA4.</text>
</comment>
<comment type="subcellular location">
    <subcellularLocation>
        <location evidence="1">Endosome</location>
    </subcellularLocation>
</comment>
<comment type="similarity">
    <text evidence="2">Belongs to the RFU1 family.</text>
</comment>
<reference key="1">
    <citation type="journal article" date="2007" name="Proc. Natl. Acad. Sci. U.S.A.">
        <title>Genome sequencing and comparative analysis of Saccharomyces cerevisiae strain YJM789.</title>
        <authorList>
            <person name="Wei W."/>
            <person name="McCusker J.H."/>
            <person name="Hyman R.W."/>
            <person name="Jones T."/>
            <person name="Ning Y."/>
            <person name="Cao Z."/>
            <person name="Gu Z."/>
            <person name="Bruno D."/>
            <person name="Miranda M."/>
            <person name="Nguyen M."/>
            <person name="Wilhelmy J."/>
            <person name="Komp C."/>
            <person name="Tamse R."/>
            <person name="Wang X."/>
            <person name="Jia P."/>
            <person name="Luedi P."/>
            <person name="Oefner P.J."/>
            <person name="David L."/>
            <person name="Dietrich F.S."/>
            <person name="Li Y."/>
            <person name="Davis R.W."/>
            <person name="Steinmetz L.M."/>
        </authorList>
    </citation>
    <scope>NUCLEOTIDE SEQUENCE [LARGE SCALE GENOMIC DNA]</scope>
    <source>
        <strain>YJM789</strain>
    </source>
</reference>
<gene>
    <name type="primary">RFU1</name>
    <name type="ORF">SCY_3652</name>
</gene>
<proteinExistence type="inferred from homology"/>
<feature type="chain" id="PRO_0000376816" description="Regulator of free ubiquitin chains 1">
    <location>
        <begin position="1"/>
        <end position="200"/>
    </location>
</feature>
<evidence type="ECO:0000250" key="1"/>
<evidence type="ECO:0000305" key="2"/>
<keyword id="KW-0967">Endosome</keyword>
<keyword id="KW-0646">Protease inhibitor</keyword>
<keyword id="KW-0789">Thiol protease inhibitor</keyword>
<sequence length="200" mass="22850">MKSSKQLVQDAKDYRFNPAIPLRIYLKTCIGILEKAQCAFQANDLSLSFIYYFRYVDLLTNKLSRHPELLRMDASSSSSSSYIHKREYLQLIKLEVPAVCKIIESLRTQIDSQYSKLQTSLANNIAKPNINANTTPVQVEQQPLPKKSFDEYSFNQSISFFQKISNAQLNTGASSQSQATARDEAYRLNYPELPRLTFST</sequence>
<name>RFU1_YEAS7</name>
<protein>
    <recommendedName>
        <fullName>Regulator of free ubiquitin chains 1</fullName>
    </recommendedName>
</protein>
<dbReference type="EMBL" id="AAFW02000167">
    <property type="protein sequence ID" value="EDN59619.1"/>
    <property type="molecule type" value="Genomic_DNA"/>
</dbReference>
<dbReference type="SMR" id="A7A0X8"/>
<dbReference type="HOGENOM" id="CLU_1348926_0_0_1"/>
<dbReference type="Proteomes" id="UP000007060">
    <property type="component" value="Unassembled WGS sequence"/>
</dbReference>
<dbReference type="GO" id="GO:0005768">
    <property type="term" value="C:endosome"/>
    <property type="evidence" value="ECO:0007669"/>
    <property type="project" value="UniProtKB-SubCell"/>
</dbReference>
<dbReference type="GO" id="GO:0016020">
    <property type="term" value="C:membrane"/>
    <property type="evidence" value="ECO:0007669"/>
    <property type="project" value="TreeGrafter"/>
</dbReference>
<dbReference type="GO" id="GO:0004869">
    <property type="term" value="F:cysteine-type endopeptidase inhibitor activity"/>
    <property type="evidence" value="ECO:0007669"/>
    <property type="project" value="UniProtKB-KW"/>
</dbReference>
<dbReference type="GO" id="GO:0061578">
    <property type="term" value="F:K63-linked deubiquitinase activity"/>
    <property type="evidence" value="ECO:0007669"/>
    <property type="project" value="TreeGrafter"/>
</dbReference>
<dbReference type="GO" id="GO:0070536">
    <property type="term" value="P:protein K63-linked deubiquitination"/>
    <property type="evidence" value="ECO:0007669"/>
    <property type="project" value="TreeGrafter"/>
</dbReference>
<dbReference type="Gene3D" id="1.20.58.80">
    <property type="entry name" value="Phosphotransferase system, lactose/cellobiose-type IIA subunit"/>
    <property type="match status" value="1"/>
</dbReference>
<dbReference type="PANTHER" id="PTHR12947">
    <property type="entry name" value="AMSH-LIKE PROTEASE"/>
    <property type="match status" value="1"/>
</dbReference>
<dbReference type="PANTHER" id="PTHR12947:SF13">
    <property type="entry name" value="FI19924P1"/>
    <property type="match status" value="1"/>
</dbReference>